<protein>
    <recommendedName>
        <fullName evidence="1">UPF0301 protein YqgE</fullName>
    </recommendedName>
</protein>
<comment type="similarity">
    <text evidence="1">Belongs to the UPF0301 (AlgH) family.</text>
</comment>
<sequence>MNLQHHFLIAMPALQDPIFRRSVVYICEHNTNGAMGIIVNKPLENLKIEGILEKLKITPEPRDESIRLDKPVMLGGPLAEDRGFILHTPPSNFASSIRISDNTVMTTSRDVLETLGTDKQPSDVLVALGYASWEKGQLEQEILDNAWLTAPADLNILFKTPIADRWREAAKLIGVDILTMPGVAGHA</sequence>
<reference key="1">
    <citation type="journal article" date="2009" name="PLoS Genet.">
        <title>Organised genome dynamics in the Escherichia coli species results in highly diverse adaptive paths.</title>
        <authorList>
            <person name="Touchon M."/>
            <person name="Hoede C."/>
            <person name="Tenaillon O."/>
            <person name="Barbe V."/>
            <person name="Baeriswyl S."/>
            <person name="Bidet P."/>
            <person name="Bingen E."/>
            <person name="Bonacorsi S."/>
            <person name="Bouchier C."/>
            <person name="Bouvet O."/>
            <person name="Calteau A."/>
            <person name="Chiapello H."/>
            <person name="Clermont O."/>
            <person name="Cruveiller S."/>
            <person name="Danchin A."/>
            <person name="Diard M."/>
            <person name="Dossat C."/>
            <person name="Karoui M.E."/>
            <person name="Frapy E."/>
            <person name="Garry L."/>
            <person name="Ghigo J.M."/>
            <person name="Gilles A.M."/>
            <person name="Johnson J."/>
            <person name="Le Bouguenec C."/>
            <person name="Lescat M."/>
            <person name="Mangenot S."/>
            <person name="Martinez-Jehanne V."/>
            <person name="Matic I."/>
            <person name="Nassif X."/>
            <person name="Oztas S."/>
            <person name="Petit M.A."/>
            <person name="Pichon C."/>
            <person name="Rouy Z."/>
            <person name="Ruf C.S."/>
            <person name="Schneider D."/>
            <person name="Tourret J."/>
            <person name="Vacherie B."/>
            <person name="Vallenet D."/>
            <person name="Medigue C."/>
            <person name="Rocha E.P.C."/>
            <person name="Denamur E."/>
        </authorList>
    </citation>
    <scope>NUCLEOTIDE SEQUENCE [LARGE SCALE GENOMIC DNA]</scope>
    <source>
        <strain>55989 / EAEC</strain>
    </source>
</reference>
<accession>B7LFL1</accession>
<proteinExistence type="inferred from homology"/>
<evidence type="ECO:0000255" key="1">
    <source>
        <dbReference type="HAMAP-Rule" id="MF_00758"/>
    </source>
</evidence>
<organism>
    <name type="scientific">Escherichia coli (strain 55989 / EAEC)</name>
    <dbReference type="NCBI Taxonomy" id="585055"/>
    <lineage>
        <taxon>Bacteria</taxon>
        <taxon>Pseudomonadati</taxon>
        <taxon>Pseudomonadota</taxon>
        <taxon>Gammaproteobacteria</taxon>
        <taxon>Enterobacterales</taxon>
        <taxon>Enterobacteriaceae</taxon>
        <taxon>Escherichia</taxon>
    </lineage>
</organism>
<feature type="chain" id="PRO_1000148382" description="UPF0301 protein YqgE">
    <location>
        <begin position="1"/>
        <end position="187"/>
    </location>
</feature>
<keyword id="KW-1185">Reference proteome</keyword>
<dbReference type="EMBL" id="CU928145">
    <property type="protein sequence ID" value="CAU99236.1"/>
    <property type="molecule type" value="Genomic_DNA"/>
</dbReference>
<dbReference type="RefSeq" id="WP_001053178.1">
    <property type="nucleotide sequence ID" value="NZ_CP028304.1"/>
</dbReference>
<dbReference type="SMR" id="B7LFL1"/>
<dbReference type="KEGG" id="eck:EC55989_3241"/>
<dbReference type="HOGENOM" id="CLU_057596_1_0_6"/>
<dbReference type="Proteomes" id="UP000000746">
    <property type="component" value="Chromosome"/>
</dbReference>
<dbReference type="GO" id="GO:0005829">
    <property type="term" value="C:cytosol"/>
    <property type="evidence" value="ECO:0007669"/>
    <property type="project" value="TreeGrafter"/>
</dbReference>
<dbReference type="FunFam" id="3.30.70.1300:FF:000001">
    <property type="entry name" value="UPF0301 protein YqgE"/>
    <property type="match status" value="1"/>
</dbReference>
<dbReference type="Gene3D" id="3.40.1740.10">
    <property type="entry name" value="VC0467-like"/>
    <property type="match status" value="1"/>
</dbReference>
<dbReference type="Gene3D" id="3.30.70.1300">
    <property type="entry name" value="VC0467-like domains"/>
    <property type="match status" value="1"/>
</dbReference>
<dbReference type="HAMAP" id="MF_00758">
    <property type="entry name" value="UPF0301"/>
    <property type="match status" value="1"/>
</dbReference>
<dbReference type="InterPro" id="IPR003774">
    <property type="entry name" value="AlgH-like"/>
</dbReference>
<dbReference type="NCBIfam" id="NF001266">
    <property type="entry name" value="PRK00228.1-1"/>
    <property type="match status" value="1"/>
</dbReference>
<dbReference type="PANTHER" id="PTHR30327">
    <property type="entry name" value="UNCHARACTERIZED PROTEIN YQGE"/>
    <property type="match status" value="1"/>
</dbReference>
<dbReference type="PANTHER" id="PTHR30327:SF1">
    <property type="entry name" value="UPF0301 PROTEIN YQGE"/>
    <property type="match status" value="1"/>
</dbReference>
<dbReference type="Pfam" id="PF02622">
    <property type="entry name" value="DUF179"/>
    <property type="match status" value="1"/>
</dbReference>
<dbReference type="SUPFAM" id="SSF143456">
    <property type="entry name" value="VC0467-like"/>
    <property type="match status" value="1"/>
</dbReference>
<gene>
    <name evidence="1" type="primary">yqgE</name>
    <name type="ordered locus">EC55989_3241</name>
</gene>
<name>YQGE_ECO55</name>